<sequence>MLHLIGFDKLYSYNMVKLALLEKGVPFTEV</sequence>
<proteinExistence type="evidence at protein level"/>
<keyword id="KW-0963">Cytoplasm</keyword>
<keyword id="KW-0903">Direct protein sequencing</keyword>
<keyword id="KW-0808">Transferase</keyword>
<reference evidence="3" key="1">
    <citation type="journal article" date="2002" name="Res. Microbiol.">
        <title>Occurrence and properties of glutathione S-transferases in phenol-degrading Pseudomonas strains.</title>
        <authorList>
            <person name="Santos P.M."/>
            <person name="Mignogna G."/>
            <person name="Heipieper H.J."/>
            <person name="Zennaro E."/>
        </authorList>
    </citation>
    <scope>PROTEIN SEQUENCE</scope>
    <scope>FUNCTION</scope>
    <scope>CATALYTIC ACTIVITY</scope>
    <scope>SUBUNIT</scope>
    <scope>SUBCELLULAR LOCATION</scope>
    <source>
        <strain>ST</strain>
    </source>
</reference>
<organism evidence="3">
    <name type="scientific">Pseudomonas fluorescens</name>
    <dbReference type="NCBI Taxonomy" id="294"/>
    <lineage>
        <taxon>Bacteria</taxon>
        <taxon>Pseudomonadati</taxon>
        <taxon>Pseudomonadota</taxon>
        <taxon>Gammaproteobacteria</taxon>
        <taxon>Pseudomonadales</taxon>
        <taxon>Pseudomonadaceae</taxon>
        <taxon>Pseudomonas</taxon>
    </lineage>
</organism>
<accession>P83001</accession>
<comment type="function">
    <text evidence="1">Conjugation of reduced glutathione to a wide number of exogenous and endogenous hydrophobic electrophiles.</text>
</comment>
<comment type="catalytic activity">
    <reaction evidence="1">
        <text>RX + glutathione = an S-substituted glutathione + a halide anion + H(+)</text>
        <dbReference type="Rhea" id="RHEA:16437"/>
        <dbReference type="ChEBI" id="CHEBI:15378"/>
        <dbReference type="ChEBI" id="CHEBI:16042"/>
        <dbReference type="ChEBI" id="CHEBI:17792"/>
        <dbReference type="ChEBI" id="CHEBI:57925"/>
        <dbReference type="ChEBI" id="CHEBI:90779"/>
        <dbReference type="EC" id="2.5.1.18"/>
    </reaction>
</comment>
<comment type="subunit">
    <text evidence="1">Monomer and homodimer.</text>
</comment>
<comment type="subcellular location">
    <subcellularLocation>
        <location evidence="1">Cytoplasm</location>
    </subcellularLocation>
</comment>
<comment type="similarity">
    <text evidence="3">Belongs to the GST superfamily.</text>
</comment>
<name>GSTE_PSEFL</name>
<evidence type="ECO:0000269" key="1">
    <source>
    </source>
</evidence>
<evidence type="ECO:0000303" key="2">
    <source>
    </source>
</evidence>
<evidence type="ECO:0000305" key="3"/>
<protein>
    <recommendedName>
        <fullName>Glutathione S-transferase</fullName>
        <ecNumber>2.5.1.18</ecNumber>
    </recommendedName>
</protein>
<feature type="chain" id="PRO_0000185977" description="Glutathione S-transferase">
    <location>
        <begin position="1"/>
        <end position="30" status="greater than"/>
    </location>
</feature>
<feature type="non-terminal residue" evidence="2">
    <location>
        <position position="30"/>
    </location>
</feature>
<dbReference type="EC" id="2.5.1.18"/>
<dbReference type="SMR" id="P83001"/>
<dbReference type="GO" id="GO:0005737">
    <property type="term" value="C:cytoplasm"/>
    <property type="evidence" value="ECO:0000303"/>
    <property type="project" value="UniProtKB"/>
</dbReference>
<dbReference type="GO" id="GO:0004364">
    <property type="term" value="F:glutathione transferase activity"/>
    <property type="evidence" value="ECO:0000303"/>
    <property type="project" value="UniProtKB"/>
</dbReference>